<organism>
    <name type="scientific">Bacillus anthracis (strain CDC 684 / NRRL 3495)</name>
    <dbReference type="NCBI Taxonomy" id="568206"/>
    <lineage>
        <taxon>Bacteria</taxon>
        <taxon>Bacillati</taxon>
        <taxon>Bacillota</taxon>
        <taxon>Bacilli</taxon>
        <taxon>Bacillales</taxon>
        <taxon>Bacillaceae</taxon>
        <taxon>Bacillus</taxon>
        <taxon>Bacillus cereus group</taxon>
    </lineage>
</organism>
<protein>
    <recommendedName>
        <fullName evidence="1">Lactate utilization protein A 1</fullName>
    </recommendedName>
</protein>
<gene>
    <name evidence="1" type="primary">lutA1</name>
    <name type="ordered locus">BAMEG_1348</name>
</gene>
<reference key="1">
    <citation type="submission" date="2008-10" db="EMBL/GenBank/DDBJ databases">
        <title>Genome sequence of Bacillus anthracis str. CDC 684.</title>
        <authorList>
            <person name="Dodson R.J."/>
            <person name="Munk A.C."/>
            <person name="Brettin T."/>
            <person name="Bruce D."/>
            <person name="Detter C."/>
            <person name="Tapia R."/>
            <person name="Han C."/>
            <person name="Sutton G."/>
            <person name="Sims D."/>
        </authorList>
    </citation>
    <scope>NUCLEOTIDE SEQUENCE [LARGE SCALE GENOMIC DNA]</scope>
    <source>
        <strain>CDC 684 / NRRL 3495</strain>
    </source>
</reference>
<feature type="chain" id="PRO_0000384021" description="Lactate utilization protein A 1">
    <location>
        <begin position="1"/>
        <end position="242"/>
    </location>
</feature>
<proteinExistence type="inferred from homology"/>
<sequence length="242" mass="27046">MKVSLFITCLSDVFFPQVGKSVVEIMNQCGVELDFPEGQTCCGQPAYNSGYQEDAKLAAKQMIKAFEHSEYIVTPSGSCASMVHHYYKEMFKGDSEWYEKAVHLADRTYELTDFVVNILGKNDWKSKLVEKAVFHQSCHMSRALGIKEEPLKLLSQVEGLDIKELPYCQDCCGFGGTFAVKMSSISETMVDEKIKHIEATEANLLIGADMGCLMNIGGRLRRENKNIQVLHVAEVLAKGLNK</sequence>
<accession>C3LCL5</accession>
<comment type="function">
    <text evidence="1">Is involved in L-lactate degradation and allows cells to grow with lactate as the sole carbon source.</text>
</comment>
<comment type="similarity">
    <text evidence="1">Belongs to the LutA/YkgE family.</text>
</comment>
<name>LUTA1_BACAC</name>
<evidence type="ECO:0000255" key="1">
    <source>
        <dbReference type="HAMAP-Rule" id="MF_02105"/>
    </source>
</evidence>
<dbReference type="EMBL" id="CP001215">
    <property type="protein sequence ID" value="ACP14789.1"/>
    <property type="molecule type" value="Genomic_DNA"/>
</dbReference>
<dbReference type="RefSeq" id="WP_000868791.1">
    <property type="nucleotide sequence ID" value="NC_012581.1"/>
</dbReference>
<dbReference type="SMR" id="C3LCL5"/>
<dbReference type="KEGG" id="bah:BAMEG_1348"/>
<dbReference type="HOGENOM" id="CLU_023081_1_0_9"/>
<dbReference type="GO" id="GO:0005829">
    <property type="term" value="C:cytosol"/>
    <property type="evidence" value="ECO:0007669"/>
    <property type="project" value="TreeGrafter"/>
</dbReference>
<dbReference type="GO" id="GO:0016491">
    <property type="term" value="F:oxidoreductase activity"/>
    <property type="evidence" value="ECO:0007669"/>
    <property type="project" value="UniProtKB-ARBA"/>
</dbReference>
<dbReference type="GO" id="GO:0006089">
    <property type="term" value="P:lactate metabolic process"/>
    <property type="evidence" value="ECO:0007669"/>
    <property type="project" value="UniProtKB-UniRule"/>
</dbReference>
<dbReference type="HAMAP" id="MF_02105">
    <property type="entry name" value="LutA"/>
    <property type="match status" value="1"/>
</dbReference>
<dbReference type="InterPro" id="IPR004017">
    <property type="entry name" value="Cys_rich_dom"/>
</dbReference>
<dbReference type="InterPro" id="IPR022822">
    <property type="entry name" value="LutA"/>
</dbReference>
<dbReference type="PANTHER" id="PTHR30296:SF0">
    <property type="entry name" value="LACTATE UTILIZATION PROTEIN A"/>
    <property type="match status" value="1"/>
</dbReference>
<dbReference type="PANTHER" id="PTHR30296">
    <property type="entry name" value="UNCHARACTERIZED PROTEIN YKGE"/>
    <property type="match status" value="1"/>
</dbReference>
<dbReference type="Pfam" id="PF02754">
    <property type="entry name" value="CCG"/>
    <property type="match status" value="2"/>
</dbReference>